<dbReference type="EMBL" id="CR760462">
    <property type="protein sequence ID" value="CAJ82848.1"/>
    <property type="molecule type" value="mRNA"/>
</dbReference>
<dbReference type="RefSeq" id="NP_001016627.1">
    <property type="nucleotide sequence ID" value="NM_001016627.3"/>
</dbReference>
<dbReference type="RefSeq" id="XP_012820168.1">
    <property type="nucleotide sequence ID" value="XM_012964714.3"/>
</dbReference>
<dbReference type="SMR" id="Q28ID5"/>
<dbReference type="FunCoup" id="Q28ID5">
    <property type="interactions" value="397"/>
</dbReference>
<dbReference type="STRING" id="8364.ENSXETP00000047098"/>
<dbReference type="PaxDb" id="8364-ENSXETP00000049323"/>
<dbReference type="GeneID" id="549381"/>
<dbReference type="KEGG" id="xtr:549381"/>
<dbReference type="AGR" id="Xenbase:XB-GENE-971548"/>
<dbReference type="CTD" id="10551"/>
<dbReference type="Xenbase" id="XB-GENE-971548">
    <property type="gene designation" value="agr2"/>
</dbReference>
<dbReference type="eggNOG" id="ENOG502RYQ8">
    <property type="taxonomic scope" value="Eukaryota"/>
</dbReference>
<dbReference type="HOGENOM" id="CLU_088048_1_0_1"/>
<dbReference type="InParanoid" id="Q28ID5"/>
<dbReference type="OMA" id="LMENMIK"/>
<dbReference type="OrthoDB" id="262308at2759"/>
<dbReference type="PhylomeDB" id="Q28ID5"/>
<dbReference type="Proteomes" id="UP000008143">
    <property type="component" value="Chromosome 6"/>
</dbReference>
<dbReference type="Bgee" id="ENSXETG00000025625">
    <property type="expression patterns" value="Expressed in neurula embryo and 6 other cell types or tissues"/>
</dbReference>
<dbReference type="GO" id="GO:0005783">
    <property type="term" value="C:endoplasmic reticulum"/>
    <property type="evidence" value="ECO:0007669"/>
    <property type="project" value="UniProtKB-SubCell"/>
</dbReference>
<dbReference type="GO" id="GO:0005576">
    <property type="term" value="C:extracellular region"/>
    <property type="evidence" value="ECO:0000250"/>
    <property type="project" value="UniProtKB"/>
</dbReference>
<dbReference type="GO" id="GO:0042802">
    <property type="term" value="F:identical protein binding"/>
    <property type="evidence" value="ECO:0000250"/>
    <property type="project" value="UniProtKB"/>
</dbReference>
<dbReference type="GO" id="GO:0010811">
    <property type="term" value="P:positive regulation of cell-substrate adhesion"/>
    <property type="evidence" value="ECO:0000250"/>
    <property type="project" value="UniProtKB"/>
</dbReference>
<dbReference type="FunFam" id="3.40.30.10:FF:000036">
    <property type="entry name" value="anterior gradient protein 2 homolog"/>
    <property type="match status" value="1"/>
</dbReference>
<dbReference type="Gene3D" id="3.40.30.10">
    <property type="entry name" value="Glutaredoxin"/>
    <property type="match status" value="1"/>
</dbReference>
<dbReference type="InterPro" id="IPR051099">
    <property type="entry name" value="AGR/TXD"/>
</dbReference>
<dbReference type="InterPro" id="IPR036249">
    <property type="entry name" value="Thioredoxin-like_sf"/>
</dbReference>
<dbReference type="PANTHER" id="PTHR15337:SF1">
    <property type="entry name" value="ANTERIOR GRADIENT PROTEIN 2 HOMOLOG"/>
    <property type="match status" value="1"/>
</dbReference>
<dbReference type="PANTHER" id="PTHR15337">
    <property type="entry name" value="ANTERIOR GRADIENT PROTEIN-RELATED"/>
    <property type="match status" value="1"/>
</dbReference>
<dbReference type="Pfam" id="PF13899">
    <property type="entry name" value="Thioredoxin_7"/>
    <property type="match status" value="1"/>
</dbReference>
<dbReference type="SUPFAM" id="SSF52833">
    <property type="entry name" value="Thioredoxin-like"/>
    <property type="match status" value="1"/>
</dbReference>
<accession>Q28ID5</accession>
<sequence>METVLKTLFVLLVATSLTLAKDLPQATRVLQTLSRGWGDNLEWVQTYEEGLYKAKTENKPLILINHRNDCPHSLALKKAFAEHQGIQKLAEEFVLLNVVYDPTDKNLQLDGQYVPKVVFVDPSLVVRADLPGKYSNHQYTYEPADIDLLFENMKKALILLKTEL</sequence>
<proteinExistence type="evidence at transcript level"/>
<reference evidence="5" key="1">
    <citation type="submission" date="2006-10" db="EMBL/GenBank/DDBJ databases">
        <authorList>
            <consortium name="Sanger Xenopus tropicalis EST/cDNA project"/>
        </authorList>
    </citation>
    <scope>NUCLEOTIDE SEQUENCE [LARGE SCALE MRNA]</scope>
    <source>
        <tissue evidence="5">Neurula</tissue>
    </source>
</reference>
<keyword id="KW-0256">Endoplasmic reticulum</keyword>
<keyword id="KW-1185">Reference proteome</keyword>
<keyword id="KW-0964">Secreted</keyword>
<keyword id="KW-0732">Signal</keyword>
<feature type="signal peptide" evidence="2">
    <location>
        <begin position="1"/>
        <end position="20"/>
    </location>
</feature>
<feature type="chain" id="PRO_0000392580" description="Anterior gradient protein 2" evidence="3">
    <location>
        <begin position="21"/>
        <end position="164"/>
    </location>
</feature>
<feature type="short sequence motif" description="Homodimer stabilization; interchain" evidence="2">
    <location>
        <begin position="34"/>
        <end position="43"/>
    </location>
</feature>
<feature type="short sequence motif" description="Homodimer stabilization; interchain" evidence="2">
    <location>
        <begin position="49"/>
        <end position="56"/>
    </location>
</feature>
<protein>
    <recommendedName>
        <fullName evidence="5">Anterior gradient protein 2</fullName>
    </recommendedName>
</protein>
<evidence type="ECO:0000250" key="1">
    <source>
        <dbReference type="UniProtKB" id="O88312"/>
    </source>
</evidence>
<evidence type="ECO:0000250" key="2">
    <source>
        <dbReference type="UniProtKB" id="O95994"/>
    </source>
</evidence>
<evidence type="ECO:0000255" key="3"/>
<evidence type="ECO:0000305" key="4"/>
<evidence type="ECO:0000312" key="5">
    <source>
        <dbReference type="EMBL" id="CAJ82848.1"/>
    </source>
</evidence>
<gene>
    <name evidence="5" type="primary">agr2</name>
    <name type="ORF">TNeu048m19.1</name>
</gene>
<name>AGR2_XENTR</name>
<comment type="subunit">
    <text evidence="2">Monomer and homodimer.</text>
</comment>
<comment type="subcellular location">
    <subcellularLocation>
        <location evidence="3 4">Secreted</location>
    </subcellularLocation>
    <subcellularLocation>
        <location evidence="1">Endoplasmic reticulum</location>
    </subcellularLocation>
</comment>
<comment type="similarity">
    <text evidence="3">Belongs to the AGR family.</text>
</comment>
<organism>
    <name type="scientific">Xenopus tropicalis</name>
    <name type="common">Western clawed frog</name>
    <name type="synonym">Silurana tropicalis</name>
    <dbReference type="NCBI Taxonomy" id="8364"/>
    <lineage>
        <taxon>Eukaryota</taxon>
        <taxon>Metazoa</taxon>
        <taxon>Chordata</taxon>
        <taxon>Craniata</taxon>
        <taxon>Vertebrata</taxon>
        <taxon>Euteleostomi</taxon>
        <taxon>Amphibia</taxon>
        <taxon>Batrachia</taxon>
        <taxon>Anura</taxon>
        <taxon>Pipoidea</taxon>
        <taxon>Pipidae</taxon>
        <taxon>Xenopodinae</taxon>
        <taxon>Xenopus</taxon>
        <taxon>Silurana</taxon>
    </lineage>
</organism>